<keyword id="KW-0997">Cell inner membrane</keyword>
<keyword id="KW-1003">Cell membrane</keyword>
<keyword id="KW-0441">Lipid A biosynthesis</keyword>
<keyword id="KW-0444">Lipid biosynthesis</keyword>
<keyword id="KW-0443">Lipid metabolism</keyword>
<keyword id="KW-0448">Lipopolysaccharide biosynthesis</keyword>
<keyword id="KW-0472">Membrane</keyword>
<keyword id="KW-0812">Transmembrane</keyword>
<keyword id="KW-1133">Transmembrane helix</keyword>
<keyword id="KW-0813">Transport</keyword>
<proteinExistence type="inferred from homology"/>
<comment type="function">
    <text evidence="1">Translocates 4-amino-4-deoxy-L-arabinose-phosphoundecaprenol (alpha-L-Ara4N-phosphoundecaprenol) from the cytoplasmic to the periplasmic side of the inner membrane.</text>
</comment>
<comment type="pathway">
    <text evidence="1">Bacterial outer membrane biogenesis; lipopolysaccharide biosynthesis.</text>
</comment>
<comment type="subunit">
    <text evidence="1">Heterodimer of ArnE and ArnF.</text>
</comment>
<comment type="subcellular location">
    <subcellularLocation>
        <location evidence="1">Cell inner membrane</location>
        <topology evidence="1">Multi-pass membrane protein</topology>
    </subcellularLocation>
</comment>
<comment type="similarity">
    <text evidence="1">Belongs to the ArnF family.</text>
</comment>
<organism>
    <name type="scientific">Salmonella paratyphi A (strain ATCC 9150 / SARB42)</name>
    <dbReference type="NCBI Taxonomy" id="295319"/>
    <lineage>
        <taxon>Bacteria</taxon>
        <taxon>Pseudomonadati</taxon>
        <taxon>Pseudomonadota</taxon>
        <taxon>Gammaproteobacteria</taxon>
        <taxon>Enterobacterales</taxon>
        <taxon>Enterobacteriaceae</taxon>
        <taxon>Salmonella</taxon>
    </lineage>
</organism>
<evidence type="ECO:0000255" key="1">
    <source>
        <dbReference type="HAMAP-Rule" id="MF_00538"/>
    </source>
</evidence>
<dbReference type="EMBL" id="CP000026">
    <property type="protein sequence ID" value="AAV76562.1"/>
    <property type="molecule type" value="Genomic_DNA"/>
</dbReference>
<dbReference type="RefSeq" id="WP_000538693.1">
    <property type="nucleotide sequence ID" value="NC_006511.1"/>
</dbReference>
<dbReference type="KEGG" id="spt:SPA0560"/>
<dbReference type="HOGENOM" id="CLU_131462_1_0_6"/>
<dbReference type="UniPathway" id="UPA00030"/>
<dbReference type="Proteomes" id="UP000008185">
    <property type="component" value="Chromosome"/>
</dbReference>
<dbReference type="GO" id="GO:0005886">
    <property type="term" value="C:plasma membrane"/>
    <property type="evidence" value="ECO:0007669"/>
    <property type="project" value="UniProtKB-SubCell"/>
</dbReference>
<dbReference type="GO" id="GO:1901505">
    <property type="term" value="F:carbohydrate derivative transmembrane transporter activity"/>
    <property type="evidence" value="ECO:0007669"/>
    <property type="project" value="InterPro"/>
</dbReference>
<dbReference type="GO" id="GO:0009245">
    <property type="term" value="P:lipid A biosynthetic process"/>
    <property type="evidence" value="ECO:0007669"/>
    <property type="project" value="UniProtKB-UniRule"/>
</dbReference>
<dbReference type="GO" id="GO:0009103">
    <property type="term" value="P:lipopolysaccharide biosynthetic process"/>
    <property type="evidence" value="ECO:0007669"/>
    <property type="project" value="UniProtKB-UniRule"/>
</dbReference>
<dbReference type="Gene3D" id="1.10.3730.20">
    <property type="match status" value="1"/>
</dbReference>
<dbReference type="HAMAP" id="MF_00538">
    <property type="entry name" value="Flippase_ArnF"/>
    <property type="match status" value="1"/>
</dbReference>
<dbReference type="InterPro" id="IPR022832">
    <property type="entry name" value="Flippase_ArnF"/>
</dbReference>
<dbReference type="InterPro" id="IPR000390">
    <property type="entry name" value="Small_drug/metabolite_transptr"/>
</dbReference>
<dbReference type="NCBIfam" id="NF002816">
    <property type="entry name" value="PRK02971.1-2"/>
    <property type="match status" value="1"/>
</dbReference>
<dbReference type="PANTHER" id="PTHR30561:SF9">
    <property type="entry name" value="4-AMINO-4-DEOXY-L-ARABINOSE-PHOSPHOUNDECAPRENOL FLIPPASE SUBUNIT ARNF-RELATED"/>
    <property type="match status" value="1"/>
</dbReference>
<dbReference type="PANTHER" id="PTHR30561">
    <property type="entry name" value="SMR FAMILY PROTON-DEPENDENT DRUG EFFLUX TRANSPORTER SUGE"/>
    <property type="match status" value="1"/>
</dbReference>
<gene>
    <name evidence="1" type="primary">arnF</name>
    <name type="ordered locus">SPA0560</name>
</gene>
<name>ARNF_SALPA</name>
<reference key="1">
    <citation type="journal article" date="2004" name="Nat. Genet.">
        <title>Comparison of genome degradation in Paratyphi A and Typhi, human-restricted serovars of Salmonella enterica that cause typhoid.</title>
        <authorList>
            <person name="McClelland M."/>
            <person name="Sanderson K.E."/>
            <person name="Clifton S.W."/>
            <person name="Latreille P."/>
            <person name="Porwollik S."/>
            <person name="Sabo A."/>
            <person name="Meyer R."/>
            <person name="Bieri T."/>
            <person name="Ozersky P."/>
            <person name="McLellan M."/>
            <person name="Harkins C.R."/>
            <person name="Wang C."/>
            <person name="Nguyen C."/>
            <person name="Berghoff A."/>
            <person name="Elliott G."/>
            <person name="Kohlberg S."/>
            <person name="Strong C."/>
            <person name="Du F."/>
            <person name="Carter J."/>
            <person name="Kremizki C."/>
            <person name="Layman D."/>
            <person name="Leonard S."/>
            <person name="Sun H."/>
            <person name="Fulton L."/>
            <person name="Nash W."/>
            <person name="Miner T."/>
            <person name="Minx P."/>
            <person name="Delehaunty K."/>
            <person name="Fronick C."/>
            <person name="Magrini V."/>
            <person name="Nhan M."/>
            <person name="Warren W."/>
            <person name="Florea L."/>
            <person name="Spieth J."/>
            <person name="Wilson R.K."/>
        </authorList>
    </citation>
    <scope>NUCLEOTIDE SEQUENCE [LARGE SCALE GENOMIC DNA]</scope>
    <source>
        <strain>ATCC 9150 / SARB42</strain>
    </source>
</reference>
<sequence>MGVMWGLISVAIASLAQLSLGFAMMRLPSIAHPLAFISGLGAFNAATLALFAGLAGYLVSVFCWQKTLHMLALSKAYALLSLSYVLVWVASMLLPGLQGAFSLKAMLGVLCIMAGVMLIFLPARS</sequence>
<accession>Q5PNB0</accession>
<feature type="chain" id="PRO_1000017386" description="Probable 4-amino-4-deoxy-L-arabinose-phosphoundecaprenol flippase subunit ArnF">
    <location>
        <begin position="1"/>
        <end position="125"/>
    </location>
</feature>
<feature type="topological domain" description="Cytoplasmic" evidence="1">
    <location>
        <begin position="1"/>
        <end position="2"/>
    </location>
</feature>
<feature type="transmembrane region" description="Helical" evidence="1">
    <location>
        <begin position="3"/>
        <end position="23"/>
    </location>
</feature>
<feature type="topological domain" description="Periplasmic" evidence="1">
    <location>
        <begin position="24"/>
        <end position="33"/>
    </location>
</feature>
<feature type="transmembrane region" description="Helical" evidence="1">
    <location>
        <begin position="34"/>
        <end position="54"/>
    </location>
</feature>
<feature type="topological domain" description="Cytoplasmic" evidence="1">
    <location>
        <begin position="55"/>
        <end position="76"/>
    </location>
</feature>
<feature type="transmembrane region" description="Helical" evidence="1">
    <location>
        <begin position="77"/>
        <end position="97"/>
    </location>
</feature>
<feature type="topological domain" description="Periplasmic" evidence="1">
    <location>
        <begin position="98"/>
        <end position="100"/>
    </location>
</feature>
<feature type="transmembrane region" description="Helical" evidence="1">
    <location>
        <begin position="101"/>
        <end position="121"/>
    </location>
</feature>
<feature type="topological domain" description="Cytoplasmic" evidence="1">
    <location>
        <begin position="122"/>
        <end position="125"/>
    </location>
</feature>
<protein>
    <recommendedName>
        <fullName evidence="1">Probable 4-amino-4-deoxy-L-arabinose-phosphoundecaprenol flippase subunit ArnF</fullName>
        <shortName evidence="1">L-Ara4N-phosphoundecaprenol flippase subunit ArnF</shortName>
    </recommendedName>
    <alternativeName>
        <fullName evidence="1">Undecaprenyl phosphate-aminoarabinose flippase subunit ArnF</fullName>
    </alternativeName>
</protein>